<dbReference type="EC" id="6.1.1.21" evidence="1"/>
<dbReference type="EMBL" id="CP000436">
    <property type="protein sequence ID" value="ABI24683.1"/>
    <property type="molecule type" value="Genomic_DNA"/>
</dbReference>
<dbReference type="SMR" id="Q0I2E8"/>
<dbReference type="KEGG" id="hso:HS_0405"/>
<dbReference type="eggNOG" id="COG0124">
    <property type="taxonomic scope" value="Bacteria"/>
</dbReference>
<dbReference type="HOGENOM" id="CLU_025113_1_1_6"/>
<dbReference type="GO" id="GO:0005737">
    <property type="term" value="C:cytoplasm"/>
    <property type="evidence" value="ECO:0007669"/>
    <property type="project" value="UniProtKB-SubCell"/>
</dbReference>
<dbReference type="GO" id="GO:0005524">
    <property type="term" value="F:ATP binding"/>
    <property type="evidence" value="ECO:0007669"/>
    <property type="project" value="UniProtKB-UniRule"/>
</dbReference>
<dbReference type="GO" id="GO:0004821">
    <property type="term" value="F:histidine-tRNA ligase activity"/>
    <property type="evidence" value="ECO:0007669"/>
    <property type="project" value="UniProtKB-UniRule"/>
</dbReference>
<dbReference type="GO" id="GO:0006427">
    <property type="term" value="P:histidyl-tRNA aminoacylation"/>
    <property type="evidence" value="ECO:0007669"/>
    <property type="project" value="UniProtKB-UniRule"/>
</dbReference>
<dbReference type="CDD" id="cd00773">
    <property type="entry name" value="HisRS-like_core"/>
    <property type="match status" value="1"/>
</dbReference>
<dbReference type="CDD" id="cd00859">
    <property type="entry name" value="HisRS_anticodon"/>
    <property type="match status" value="1"/>
</dbReference>
<dbReference type="FunFam" id="3.30.930.10:FF:000005">
    <property type="entry name" value="Histidine--tRNA ligase"/>
    <property type="match status" value="1"/>
</dbReference>
<dbReference type="Gene3D" id="3.40.50.800">
    <property type="entry name" value="Anticodon-binding domain"/>
    <property type="match status" value="1"/>
</dbReference>
<dbReference type="Gene3D" id="3.30.930.10">
    <property type="entry name" value="Bira Bifunctional Protein, Domain 2"/>
    <property type="match status" value="1"/>
</dbReference>
<dbReference type="HAMAP" id="MF_00127">
    <property type="entry name" value="His_tRNA_synth"/>
    <property type="match status" value="1"/>
</dbReference>
<dbReference type="InterPro" id="IPR006195">
    <property type="entry name" value="aa-tRNA-synth_II"/>
</dbReference>
<dbReference type="InterPro" id="IPR045864">
    <property type="entry name" value="aa-tRNA-synth_II/BPL/LPL"/>
</dbReference>
<dbReference type="InterPro" id="IPR004154">
    <property type="entry name" value="Anticodon-bd"/>
</dbReference>
<dbReference type="InterPro" id="IPR036621">
    <property type="entry name" value="Anticodon-bd_dom_sf"/>
</dbReference>
<dbReference type="InterPro" id="IPR015807">
    <property type="entry name" value="His-tRNA-ligase"/>
</dbReference>
<dbReference type="InterPro" id="IPR041715">
    <property type="entry name" value="HisRS-like_core"/>
</dbReference>
<dbReference type="InterPro" id="IPR004516">
    <property type="entry name" value="HisRS/HisZ"/>
</dbReference>
<dbReference type="InterPro" id="IPR033656">
    <property type="entry name" value="HisRS_anticodon"/>
</dbReference>
<dbReference type="NCBIfam" id="TIGR00442">
    <property type="entry name" value="hisS"/>
    <property type="match status" value="1"/>
</dbReference>
<dbReference type="PANTHER" id="PTHR43707:SF1">
    <property type="entry name" value="HISTIDINE--TRNA LIGASE, MITOCHONDRIAL-RELATED"/>
    <property type="match status" value="1"/>
</dbReference>
<dbReference type="PANTHER" id="PTHR43707">
    <property type="entry name" value="HISTIDYL-TRNA SYNTHETASE"/>
    <property type="match status" value="1"/>
</dbReference>
<dbReference type="Pfam" id="PF03129">
    <property type="entry name" value="HGTP_anticodon"/>
    <property type="match status" value="1"/>
</dbReference>
<dbReference type="Pfam" id="PF13393">
    <property type="entry name" value="tRNA-synt_His"/>
    <property type="match status" value="1"/>
</dbReference>
<dbReference type="PIRSF" id="PIRSF001549">
    <property type="entry name" value="His-tRNA_synth"/>
    <property type="match status" value="1"/>
</dbReference>
<dbReference type="SUPFAM" id="SSF52954">
    <property type="entry name" value="Class II aaRS ABD-related"/>
    <property type="match status" value="1"/>
</dbReference>
<dbReference type="SUPFAM" id="SSF55681">
    <property type="entry name" value="Class II aaRS and biotin synthetases"/>
    <property type="match status" value="1"/>
</dbReference>
<dbReference type="PROSITE" id="PS50862">
    <property type="entry name" value="AA_TRNA_LIGASE_II"/>
    <property type="match status" value="1"/>
</dbReference>
<organism>
    <name type="scientific">Histophilus somni (strain 129Pt)</name>
    <name type="common">Haemophilus somnus</name>
    <dbReference type="NCBI Taxonomy" id="205914"/>
    <lineage>
        <taxon>Bacteria</taxon>
        <taxon>Pseudomonadati</taxon>
        <taxon>Pseudomonadota</taxon>
        <taxon>Gammaproteobacteria</taxon>
        <taxon>Pasteurellales</taxon>
        <taxon>Pasteurellaceae</taxon>
        <taxon>Histophilus</taxon>
    </lineage>
</organism>
<proteinExistence type="inferred from homology"/>
<evidence type="ECO:0000255" key="1">
    <source>
        <dbReference type="HAMAP-Rule" id="MF_00127"/>
    </source>
</evidence>
<name>SYH_HISS1</name>
<reference key="1">
    <citation type="journal article" date="2007" name="J. Bacteriol.">
        <title>Complete genome sequence of Haemophilus somnus (Histophilus somni) strain 129Pt and comparison to Haemophilus ducreyi 35000HP and Haemophilus influenzae Rd.</title>
        <authorList>
            <person name="Challacombe J.F."/>
            <person name="Duncan A.J."/>
            <person name="Brettin T.S."/>
            <person name="Bruce D."/>
            <person name="Chertkov O."/>
            <person name="Detter J.C."/>
            <person name="Han C.S."/>
            <person name="Misra M."/>
            <person name="Richardson P."/>
            <person name="Tapia R."/>
            <person name="Thayer N."/>
            <person name="Xie G."/>
            <person name="Inzana T.J."/>
        </authorList>
    </citation>
    <scope>NUCLEOTIDE SEQUENCE [LARGE SCALE GENOMIC DNA]</scope>
    <source>
        <strain>129Pt</strain>
    </source>
</reference>
<gene>
    <name evidence="1" type="primary">hisS</name>
    <name type="ordered locus">HS_0405</name>
</gene>
<sequence length="425" mass="48127">MAKTIQAIRGMNDCSPTESLLWQWVEEKVRSVLQTYGYSEVRMPIVESTPLFARAIGEVTDVVSKEMYTFWDNDEQLTLRPEGTAGCVRAAIEHGWIYNNEQRLWYMGPMFRHERPQKGRYRQFHQAGVEVFGIANPEIDAELILLTARLWKQLGIFDHVTLQLNSIGSLESRQNYRSALVEFLQQHTDLLSEEEKERLVKNPLRILDTKNQVLQEVLNDAPKLLDYLDQESREHFSQLCDLLDAVGIQYEINPKLVRGLDYYNKTVFEWVTSALGAQGTVCGGGRYDGLVEQLGGHATCSVGFAMGLERLVLLVQEVNKQIVLPSAVDIYVVYFGEKTTLPAFQLAEKIRTELPHLRTMTHCGGGNFKKQFKRADKVGAKFALVIGETEVKTQQVVVKDLLGGAEQLSLALTDVVIYLKQAITQ</sequence>
<comment type="catalytic activity">
    <reaction evidence="1">
        <text>tRNA(His) + L-histidine + ATP = L-histidyl-tRNA(His) + AMP + diphosphate + H(+)</text>
        <dbReference type="Rhea" id="RHEA:17313"/>
        <dbReference type="Rhea" id="RHEA-COMP:9665"/>
        <dbReference type="Rhea" id="RHEA-COMP:9689"/>
        <dbReference type="ChEBI" id="CHEBI:15378"/>
        <dbReference type="ChEBI" id="CHEBI:30616"/>
        <dbReference type="ChEBI" id="CHEBI:33019"/>
        <dbReference type="ChEBI" id="CHEBI:57595"/>
        <dbReference type="ChEBI" id="CHEBI:78442"/>
        <dbReference type="ChEBI" id="CHEBI:78527"/>
        <dbReference type="ChEBI" id="CHEBI:456215"/>
        <dbReference type="EC" id="6.1.1.21"/>
    </reaction>
</comment>
<comment type="subunit">
    <text evidence="1">Homodimer.</text>
</comment>
<comment type="subcellular location">
    <subcellularLocation>
        <location evidence="1">Cytoplasm</location>
    </subcellularLocation>
</comment>
<comment type="similarity">
    <text evidence="1">Belongs to the class-II aminoacyl-tRNA synthetase family.</text>
</comment>
<keyword id="KW-0030">Aminoacyl-tRNA synthetase</keyword>
<keyword id="KW-0067">ATP-binding</keyword>
<keyword id="KW-0963">Cytoplasm</keyword>
<keyword id="KW-0436">Ligase</keyword>
<keyword id="KW-0547">Nucleotide-binding</keyword>
<keyword id="KW-0648">Protein biosynthesis</keyword>
<accession>Q0I2E8</accession>
<feature type="chain" id="PRO_1000016370" description="Histidine--tRNA ligase">
    <location>
        <begin position="1"/>
        <end position="425"/>
    </location>
</feature>
<protein>
    <recommendedName>
        <fullName evidence="1">Histidine--tRNA ligase</fullName>
        <ecNumber evidence="1">6.1.1.21</ecNumber>
    </recommendedName>
    <alternativeName>
        <fullName evidence="1">Histidyl-tRNA synthetase</fullName>
        <shortName evidence="1">HisRS</shortName>
    </alternativeName>
</protein>